<evidence type="ECO:0000255" key="1">
    <source>
        <dbReference type="HAMAP-Rule" id="MF_00105"/>
    </source>
</evidence>
<reference key="1">
    <citation type="journal article" date="2009" name="Proc. Natl. Acad. Sci. U.S.A.">
        <title>The genomic basis of trophic strategy in marine bacteria.</title>
        <authorList>
            <person name="Lauro F.M."/>
            <person name="McDougald D."/>
            <person name="Thomas T."/>
            <person name="Williams T.J."/>
            <person name="Egan S."/>
            <person name="Rice S."/>
            <person name="DeMaere M.Z."/>
            <person name="Ting L."/>
            <person name="Ertan H."/>
            <person name="Johnson J."/>
            <person name="Ferriera S."/>
            <person name="Lapidus A."/>
            <person name="Anderson I."/>
            <person name="Kyrpides N."/>
            <person name="Munk A.C."/>
            <person name="Detter C."/>
            <person name="Han C.S."/>
            <person name="Brown M.V."/>
            <person name="Robb F.T."/>
            <person name="Kjelleberg S."/>
            <person name="Cavicchioli R."/>
        </authorList>
    </citation>
    <scope>NUCLEOTIDE SEQUENCE [LARGE SCALE GENOMIC DNA]</scope>
    <source>
        <strain>DSM 13593 / LMG 18877 / RB2256</strain>
    </source>
</reference>
<dbReference type="EMBL" id="CP000356">
    <property type="protein sequence ID" value="ABF52703.1"/>
    <property type="molecule type" value="Genomic_DNA"/>
</dbReference>
<dbReference type="RefSeq" id="WP_011541291.1">
    <property type="nucleotide sequence ID" value="NC_008048.1"/>
</dbReference>
<dbReference type="SMR" id="Q1GUG9"/>
<dbReference type="STRING" id="317655.Sala_0986"/>
<dbReference type="KEGG" id="sal:Sala_0986"/>
<dbReference type="eggNOG" id="COG0782">
    <property type="taxonomic scope" value="Bacteria"/>
</dbReference>
<dbReference type="HOGENOM" id="CLU_101379_2_0_5"/>
<dbReference type="OrthoDB" id="9808774at2"/>
<dbReference type="Proteomes" id="UP000006578">
    <property type="component" value="Chromosome"/>
</dbReference>
<dbReference type="GO" id="GO:0003677">
    <property type="term" value="F:DNA binding"/>
    <property type="evidence" value="ECO:0007669"/>
    <property type="project" value="UniProtKB-UniRule"/>
</dbReference>
<dbReference type="GO" id="GO:0070063">
    <property type="term" value="F:RNA polymerase binding"/>
    <property type="evidence" value="ECO:0007669"/>
    <property type="project" value="InterPro"/>
</dbReference>
<dbReference type="GO" id="GO:0006354">
    <property type="term" value="P:DNA-templated transcription elongation"/>
    <property type="evidence" value="ECO:0007669"/>
    <property type="project" value="TreeGrafter"/>
</dbReference>
<dbReference type="GO" id="GO:0032784">
    <property type="term" value="P:regulation of DNA-templated transcription elongation"/>
    <property type="evidence" value="ECO:0007669"/>
    <property type="project" value="UniProtKB-UniRule"/>
</dbReference>
<dbReference type="FunFam" id="1.10.287.180:FF:000001">
    <property type="entry name" value="Transcription elongation factor GreA"/>
    <property type="match status" value="1"/>
</dbReference>
<dbReference type="FunFam" id="3.10.50.30:FF:000001">
    <property type="entry name" value="Transcription elongation factor GreA"/>
    <property type="match status" value="1"/>
</dbReference>
<dbReference type="Gene3D" id="3.10.50.30">
    <property type="entry name" value="Transcription elongation factor, GreA/GreB, C-terminal domain"/>
    <property type="match status" value="1"/>
</dbReference>
<dbReference type="Gene3D" id="1.10.287.180">
    <property type="entry name" value="Transcription elongation factor, GreA/GreB, N-terminal domain"/>
    <property type="match status" value="1"/>
</dbReference>
<dbReference type="HAMAP" id="MF_00105">
    <property type="entry name" value="GreA_GreB"/>
    <property type="match status" value="1"/>
</dbReference>
<dbReference type="InterPro" id="IPR036953">
    <property type="entry name" value="GreA/GreB_C_sf"/>
</dbReference>
<dbReference type="InterPro" id="IPR018151">
    <property type="entry name" value="TF_GreA/GreB_CS"/>
</dbReference>
<dbReference type="InterPro" id="IPR006359">
    <property type="entry name" value="Tscrpt_elong_fac_GreA"/>
</dbReference>
<dbReference type="InterPro" id="IPR028624">
    <property type="entry name" value="Tscrpt_elong_fac_GreA/B"/>
</dbReference>
<dbReference type="InterPro" id="IPR001437">
    <property type="entry name" value="Tscrpt_elong_fac_GreA/B_C"/>
</dbReference>
<dbReference type="InterPro" id="IPR023459">
    <property type="entry name" value="Tscrpt_elong_fac_GreA/B_fam"/>
</dbReference>
<dbReference type="InterPro" id="IPR022691">
    <property type="entry name" value="Tscrpt_elong_fac_GreA/B_N"/>
</dbReference>
<dbReference type="InterPro" id="IPR036805">
    <property type="entry name" value="Tscrpt_elong_fac_GreA/B_N_sf"/>
</dbReference>
<dbReference type="NCBIfam" id="TIGR01462">
    <property type="entry name" value="greA"/>
    <property type="match status" value="1"/>
</dbReference>
<dbReference type="NCBIfam" id="NF001261">
    <property type="entry name" value="PRK00226.1-2"/>
    <property type="match status" value="1"/>
</dbReference>
<dbReference type="NCBIfam" id="NF001263">
    <property type="entry name" value="PRK00226.1-4"/>
    <property type="match status" value="1"/>
</dbReference>
<dbReference type="NCBIfam" id="NF001264">
    <property type="entry name" value="PRK00226.1-5"/>
    <property type="match status" value="1"/>
</dbReference>
<dbReference type="PANTHER" id="PTHR30437">
    <property type="entry name" value="TRANSCRIPTION ELONGATION FACTOR GREA"/>
    <property type="match status" value="1"/>
</dbReference>
<dbReference type="PANTHER" id="PTHR30437:SF4">
    <property type="entry name" value="TRANSCRIPTION ELONGATION FACTOR GREA"/>
    <property type="match status" value="1"/>
</dbReference>
<dbReference type="Pfam" id="PF01272">
    <property type="entry name" value="GreA_GreB"/>
    <property type="match status" value="1"/>
</dbReference>
<dbReference type="Pfam" id="PF03449">
    <property type="entry name" value="GreA_GreB_N"/>
    <property type="match status" value="1"/>
</dbReference>
<dbReference type="PIRSF" id="PIRSF006092">
    <property type="entry name" value="GreA_GreB"/>
    <property type="match status" value="1"/>
</dbReference>
<dbReference type="SUPFAM" id="SSF54534">
    <property type="entry name" value="FKBP-like"/>
    <property type="match status" value="1"/>
</dbReference>
<dbReference type="SUPFAM" id="SSF46557">
    <property type="entry name" value="GreA transcript cleavage protein, N-terminal domain"/>
    <property type="match status" value="1"/>
</dbReference>
<dbReference type="PROSITE" id="PS00830">
    <property type="entry name" value="GREAB_2"/>
    <property type="match status" value="1"/>
</dbReference>
<organism>
    <name type="scientific">Sphingopyxis alaskensis (strain DSM 13593 / LMG 18877 / RB2256)</name>
    <name type="common">Sphingomonas alaskensis</name>
    <dbReference type="NCBI Taxonomy" id="317655"/>
    <lineage>
        <taxon>Bacteria</taxon>
        <taxon>Pseudomonadati</taxon>
        <taxon>Pseudomonadota</taxon>
        <taxon>Alphaproteobacteria</taxon>
        <taxon>Sphingomonadales</taxon>
        <taxon>Sphingomonadaceae</taxon>
        <taxon>Sphingopyxis</taxon>
    </lineage>
</organism>
<keyword id="KW-0175">Coiled coil</keyword>
<keyword id="KW-0238">DNA-binding</keyword>
<keyword id="KW-1185">Reference proteome</keyword>
<keyword id="KW-0804">Transcription</keyword>
<keyword id="KW-0805">Transcription regulation</keyword>
<feature type="chain" id="PRO_1000094197" description="Transcription elongation factor GreA">
    <location>
        <begin position="1"/>
        <end position="158"/>
    </location>
</feature>
<feature type="coiled-coil region" evidence="1">
    <location>
        <begin position="53"/>
        <end position="75"/>
    </location>
</feature>
<comment type="function">
    <text evidence="1">Necessary for efficient RNA polymerase transcription elongation past template-encoded arresting sites. The arresting sites in DNA have the property of trapping a certain fraction of elongating RNA polymerases that pass through, resulting in locked ternary complexes. Cleavage of the nascent transcript by cleavage factors such as GreA or GreB allows the resumption of elongation from the new 3'terminus. GreA releases sequences of 2 to 3 nucleotides.</text>
</comment>
<comment type="similarity">
    <text evidence="1">Belongs to the GreA/GreB family.</text>
</comment>
<proteinExistence type="inferred from homology"/>
<name>GREA_SPHAL</name>
<gene>
    <name evidence="1" type="primary">greA</name>
    <name type="ordered locus">Sala_0986</name>
</gene>
<sequence>MASVEKVPMLAEGYEKLTAQLAALKAERPLIVDAIEEARAHGDLSENAEYHAAKERQGQVEATIGDLEDKLSRAQVIDPTTLSGDRIVFGATVTLTDEDDKPVKYQIVGQAEADAKAGKISYNSPLGRALIGRRVDDEIEVTVPSGDKYYLVTKIEFI</sequence>
<protein>
    <recommendedName>
        <fullName evidence="1">Transcription elongation factor GreA</fullName>
    </recommendedName>
    <alternativeName>
        <fullName evidence="1">Transcript cleavage factor GreA</fullName>
    </alternativeName>
</protein>
<accession>Q1GUG9</accession>